<evidence type="ECO:0000255" key="1">
    <source>
        <dbReference type="HAMAP-Rule" id="MF_01080"/>
    </source>
</evidence>
<gene>
    <name evidence="1" type="primary">truB</name>
    <name type="ordered locus">Rmet_2029</name>
</gene>
<keyword id="KW-0413">Isomerase</keyword>
<keyword id="KW-1185">Reference proteome</keyword>
<keyword id="KW-0819">tRNA processing</keyword>
<feature type="chain" id="PRO_1000084653" description="tRNA pseudouridine synthase B">
    <location>
        <begin position="1"/>
        <end position="314"/>
    </location>
</feature>
<feature type="active site" description="Nucleophile" evidence="1">
    <location>
        <position position="54"/>
    </location>
</feature>
<dbReference type="EC" id="5.4.99.25" evidence="1"/>
<dbReference type="EMBL" id="CP000352">
    <property type="protein sequence ID" value="ABF08908.1"/>
    <property type="molecule type" value="Genomic_DNA"/>
</dbReference>
<dbReference type="RefSeq" id="WP_011516744.1">
    <property type="nucleotide sequence ID" value="NC_007973.1"/>
</dbReference>
<dbReference type="SMR" id="Q1LLR8"/>
<dbReference type="STRING" id="266264.Rmet_2029"/>
<dbReference type="KEGG" id="rme:Rmet_2029"/>
<dbReference type="eggNOG" id="COG0130">
    <property type="taxonomic scope" value="Bacteria"/>
</dbReference>
<dbReference type="HOGENOM" id="CLU_032087_0_3_4"/>
<dbReference type="Proteomes" id="UP000002429">
    <property type="component" value="Chromosome"/>
</dbReference>
<dbReference type="GO" id="GO:0003723">
    <property type="term" value="F:RNA binding"/>
    <property type="evidence" value="ECO:0007669"/>
    <property type="project" value="InterPro"/>
</dbReference>
<dbReference type="GO" id="GO:0160148">
    <property type="term" value="F:tRNA pseudouridine(55) synthase activity"/>
    <property type="evidence" value="ECO:0007669"/>
    <property type="project" value="UniProtKB-EC"/>
</dbReference>
<dbReference type="GO" id="GO:1990481">
    <property type="term" value="P:mRNA pseudouridine synthesis"/>
    <property type="evidence" value="ECO:0007669"/>
    <property type="project" value="TreeGrafter"/>
</dbReference>
<dbReference type="GO" id="GO:0031119">
    <property type="term" value="P:tRNA pseudouridine synthesis"/>
    <property type="evidence" value="ECO:0007669"/>
    <property type="project" value="UniProtKB-UniRule"/>
</dbReference>
<dbReference type="CDD" id="cd02573">
    <property type="entry name" value="PseudoU_synth_EcTruB"/>
    <property type="match status" value="1"/>
</dbReference>
<dbReference type="CDD" id="cd21152">
    <property type="entry name" value="PUA_TruB_bacterial"/>
    <property type="match status" value="1"/>
</dbReference>
<dbReference type="FunFam" id="3.30.2350.10:FF:000011">
    <property type="entry name" value="tRNA pseudouridine synthase B"/>
    <property type="match status" value="1"/>
</dbReference>
<dbReference type="Gene3D" id="3.30.2350.10">
    <property type="entry name" value="Pseudouridine synthase"/>
    <property type="match status" value="1"/>
</dbReference>
<dbReference type="Gene3D" id="2.30.130.10">
    <property type="entry name" value="PUA domain"/>
    <property type="match status" value="1"/>
</dbReference>
<dbReference type="HAMAP" id="MF_01080">
    <property type="entry name" value="TruB_bact"/>
    <property type="match status" value="1"/>
</dbReference>
<dbReference type="InterPro" id="IPR020103">
    <property type="entry name" value="PsdUridine_synth_cat_dom_sf"/>
</dbReference>
<dbReference type="InterPro" id="IPR002501">
    <property type="entry name" value="PsdUridine_synth_N"/>
</dbReference>
<dbReference type="InterPro" id="IPR015947">
    <property type="entry name" value="PUA-like_sf"/>
</dbReference>
<dbReference type="InterPro" id="IPR036974">
    <property type="entry name" value="PUA_sf"/>
</dbReference>
<dbReference type="InterPro" id="IPR014780">
    <property type="entry name" value="tRNA_psdUridine_synth_TruB"/>
</dbReference>
<dbReference type="InterPro" id="IPR015240">
    <property type="entry name" value="tRNA_sdUridine_synth_fam1_C"/>
</dbReference>
<dbReference type="InterPro" id="IPR032819">
    <property type="entry name" value="TruB_C"/>
</dbReference>
<dbReference type="NCBIfam" id="TIGR00431">
    <property type="entry name" value="TruB"/>
    <property type="match status" value="1"/>
</dbReference>
<dbReference type="PANTHER" id="PTHR13767:SF2">
    <property type="entry name" value="PSEUDOURIDYLATE SYNTHASE TRUB1"/>
    <property type="match status" value="1"/>
</dbReference>
<dbReference type="PANTHER" id="PTHR13767">
    <property type="entry name" value="TRNA-PSEUDOURIDINE SYNTHASE"/>
    <property type="match status" value="1"/>
</dbReference>
<dbReference type="Pfam" id="PF09157">
    <property type="entry name" value="TruB-C_2"/>
    <property type="match status" value="1"/>
</dbReference>
<dbReference type="Pfam" id="PF16198">
    <property type="entry name" value="TruB_C_2"/>
    <property type="match status" value="1"/>
</dbReference>
<dbReference type="Pfam" id="PF01509">
    <property type="entry name" value="TruB_N"/>
    <property type="match status" value="1"/>
</dbReference>
<dbReference type="SUPFAM" id="SSF55120">
    <property type="entry name" value="Pseudouridine synthase"/>
    <property type="match status" value="1"/>
</dbReference>
<dbReference type="SUPFAM" id="SSF88697">
    <property type="entry name" value="PUA domain-like"/>
    <property type="match status" value="1"/>
</dbReference>
<reference key="1">
    <citation type="journal article" date="2010" name="PLoS ONE">
        <title>The complete genome sequence of Cupriavidus metallidurans strain CH34, a master survivalist in harsh and anthropogenic environments.</title>
        <authorList>
            <person name="Janssen P.J."/>
            <person name="Van Houdt R."/>
            <person name="Moors H."/>
            <person name="Monsieurs P."/>
            <person name="Morin N."/>
            <person name="Michaux A."/>
            <person name="Benotmane M.A."/>
            <person name="Leys N."/>
            <person name="Vallaeys T."/>
            <person name="Lapidus A."/>
            <person name="Monchy S."/>
            <person name="Medigue C."/>
            <person name="Taghavi S."/>
            <person name="McCorkle S."/>
            <person name="Dunn J."/>
            <person name="van der Lelie D."/>
            <person name="Mergeay M."/>
        </authorList>
    </citation>
    <scope>NUCLEOTIDE SEQUENCE [LARGE SCALE GENOMIC DNA]</scope>
    <source>
        <strain>ATCC 43123 / DSM 2839 / NBRC 102507 / CH34</strain>
    </source>
</reference>
<protein>
    <recommendedName>
        <fullName evidence="1">tRNA pseudouridine synthase B</fullName>
        <ecNumber evidence="1">5.4.99.25</ecNumber>
    </recommendedName>
    <alternativeName>
        <fullName evidence="1">tRNA pseudouridine(55) synthase</fullName>
        <shortName evidence="1">Psi55 synthase</shortName>
    </alternativeName>
    <alternativeName>
        <fullName evidence="1">tRNA pseudouridylate synthase</fullName>
    </alternativeName>
    <alternativeName>
        <fullName evidence="1">tRNA-uridine isomerase</fullName>
    </alternativeName>
</protein>
<comment type="function">
    <text evidence="1">Responsible for synthesis of pseudouridine from uracil-55 in the psi GC loop of transfer RNAs.</text>
</comment>
<comment type="catalytic activity">
    <reaction evidence="1">
        <text>uridine(55) in tRNA = pseudouridine(55) in tRNA</text>
        <dbReference type="Rhea" id="RHEA:42532"/>
        <dbReference type="Rhea" id="RHEA-COMP:10101"/>
        <dbReference type="Rhea" id="RHEA-COMP:10102"/>
        <dbReference type="ChEBI" id="CHEBI:65314"/>
        <dbReference type="ChEBI" id="CHEBI:65315"/>
        <dbReference type="EC" id="5.4.99.25"/>
    </reaction>
</comment>
<comment type="similarity">
    <text evidence="1">Belongs to the pseudouridine synthase TruB family. Type 1 subfamily.</text>
</comment>
<name>TRUB_CUPMC</name>
<accession>Q1LLR8</accession>
<sequence length="314" mass="33803">MTDSSATRPPRLPRRDVHGVLLLDKPLGLSSNDALVRAKRLLRANKAGHTGTLDPLATGLLPLCFGEATKFSQDLLDADKTYEAKVRLGATTTTGDAEGEIVVERLVTCDHDALDAAVARFTGEIEQVPPMYSALKKDGKPLYEYARAGQTVERAARQVTIHAITLLDVDLPAAMFTMRVTCSKGTYIRTLAEDVGEALGCGAHLIGLRRTAVGDLTLEGAVTLEQIDAQADEARPGMLAPVDALLQRCPPVHLDAAAMGRFLQGQRIARRDLPEGQVPPDEGTLARVYGDEGRLLGVARMKEGALRPERLVKL</sequence>
<organism>
    <name type="scientific">Cupriavidus metallidurans (strain ATCC 43123 / DSM 2839 / NBRC 102507 / CH34)</name>
    <name type="common">Ralstonia metallidurans</name>
    <dbReference type="NCBI Taxonomy" id="266264"/>
    <lineage>
        <taxon>Bacteria</taxon>
        <taxon>Pseudomonadati</taxon>
        <taxon>Pseudomonadota</taxon>
        <taxon>Betaproteobacteria</taxon>
        <taxon>Burkholderiales</taxon>
        <taxon>Burkholderiaceae</taxon>
        <taxon>Cupriavidus</taxon>
    </lineage>
</organism>
<proteinExistence type="inferred from homology"/>